<reference key="1">
    <citation type="submission" date="2007-07" db="EMBL/GenBank/DDBJ databases">
        <title>Complete genome sequence of Campylobacter jejuni subsp doylei 269.97 isolated from human blood.</title>
        <authorList>
            <person name="Fouts D.E."/>
            <person name="Mongodin E.F."/>
            <person name="Puiu D."/>
            <person name="Sebastian Y."/>
            <person name="Miller W.G."/>
            <person name="Mandrell R.E."/>
            <person name="Lastovica A.J."/>
            <person name="Nelson K.E."/>
        </authorList>
    </citation>
    <scope>NUCLEOTIDE SEQUENCE [LARGE SCALE GENOMIC DNA]</scope>
    <source>
        <strain>ATCC BAA-1458 / RM4099 / 269.97</strain>
    </source>
</reference>
<proteinExistence type="inferred from homology"/>
<dbReference type="EC" id="6.1.1.14" evidence="1"/>
<dbReference type="EMBL" id="CP000768">
    <property type="protein sequence ID" value="ABS43295.1"/>
    <property type="molecule type" value="Genomic_DNA"/>
</dbReference>
<dbReference type="SMR" id="A7H4C1"/>
<dbReference type="KEGG" id="cjd:JJD26997_1302"/>
<dbReference type="HOGENOM" id="CLU_057066_1_0_7"/>
<dbReference type="Proteomes" id="UP000002302">
    <property type="component" value="Chromosome"/>
</dbReference>
<dbReference type="GO" id="GO:0005829">
    <property type="term" value="C:cytosol"/>
    <property type="evidence" value="ECO:0007669"/>
    <property type="project" value="TreeGrafter"/>
</dbReference>
<dbReference type="GO" id="GO:0005524">
    <property type="term" value="F:ATP binding"/>
    <property type="evidence" value="ECO:0007669"/>
    <property type="project" value="UniProtKB-UniRule"/>
</dbReference>
<dbReference type="GO" id="GO:0004820">
    <property type="term" value="F:glycine-tRNA ligase activity"/>
    <property type="evidence" value="ECO:0007669"/>
    <property type="project" value="UniProtKB-UniRule"/>
</dbReference>
<dbReference type="GO" id="GO:0006426">
    <property type="term" value="P:glycyl-tRNA aminoacylation"/>
    <property type="evidence" value="ECO:0007669"/>
    <property type="project" value="UniProtKB-UniRule"/>
</dbReference>
<dbReference type="CDD" id="cd00733">
    <property type="entry name" value="GlyRS_alpha_core"/>
    <property type="match status" value="1"/>
</dbReference>
<dbReference type="FunFam" id="3.30.930.10:FF:000006">
    <property type="entry name" value="Glycine--tRNA ligase alpha subunit"/>
    <property type="match status" value="1"/>
</dbReference>
<dbReference type="Gene3D" id="3.30.930.10">
    <property type="entry name" value="Bira Bifunctional Protein, Domain 2"/>
    <property type="match status" value="1"/>
</dbReference>
<dbReference type="Gene3D" id="1.20.58.180">
    <property type="entry name" value="Class II aaRS and biotin synthetases, domain 2"/>
    <property type="match status" value="1"/>
</dbReference>
<dbReference type="HAMAP" id="MF_00254">
    <property type="entry name" value="Gly_tRNA_synth_alpha"/>
    <property type="match status" value="1"/>
</dbReference>
<dbReference type="InterPro" id="IPR045864">
    <property type="entry name" value="aa-tRNA-synth_II/BPL/LPL"/>
</dbReference>
<dbReference type="InterPro" id="IPR006194">
    <property type="entry name" value="Gly-tRNA-synth_heterodimer"/>
</dbReference>
<dbReference type="InterPro" id="IPR002310">
    <property type="entry name" value="Gly-tRNA_ligase_asu"/>
</dbReference>
<dbReference type="NCBIfam" id="TIGR00388">
    <property type="entry name" value="glyQ"/>
    <property type="match status" value="1"/>
</dbReference>
<dbReference type="NCBIfam" id="NF006827">
    <property type="entry name" value="PRK09348.1"/>
    <property type="match status" value="1"/>
</dbReference>
<dbReference type="PANTHER" id="PTHR30075:SF2">
    <property type="entry name" value="GLYCINE--TRNA LIGASE, CHLOROPLASTIC_MITOCHONDRIAL 2"/>
    <property type="match status" value="1"/>
</dbReference>
<dbReference type="PANTHER" id="PTHR30075">
    <property type="entry name" value="GLYCYL-TRNA SYNTHETASE"/>
    <property type="match status" value="1"/>
</dbReference>
<dbReference type="Pfam" id="PF02091">
    <property type="entry name" value="tRNA-synt_2e"/>
    <property type="match status" value="1"/>
</dbReference>
<dbReference type="PRINTS" id="PR01044">
    <property type="entry name" value="TRNASYNTHGA"/>
</dbReference>
<dbReference type="SUPFAM" id="SSF55681">
    <property type="entry name" value="Class II aaRS and biotin synthetases"/>
    <property type="match status" value="1"/>
</dbReference>
<dbReference type="PROSITE" id="PS50861">
    <property type="entry name" value="AA_TRNA_LIGASE_II_GLYAB"/>
    <property type="match status" value="1"/>
</dbReference>
<keyword id="KW-0030">Aminoacyl-tRNA synthetase</keyword>
<keyword id="KW-0067">ATP-binding</keyword>
<keyword id="KW-0963">Cytoplasm</keyword>
<keyword id="KW-0436">Ligase</keyword>
<keyword id="KW-0547">Nucleotide-binding</keyword>
<keyword id="KW-0648">Protein biosynthesis</keyword>
<comment type="catalytic activity">
    <reaction evidence="1">
        <text>tRNA(Gly) + glycine + ATP = glycyl-tRNA(Gly) + AMP + diphosphate</text>
        <dbReference type="Rhea" id="RHEA:16013"/>
        <dbReference type="Rhea" id="RHEA-COMP:9664"/>
        <dbReference type="Rhea" id="RHEA-COMP:9683"/>
        <dbReference type="ChEBI" id="CHEBI:30616"/>
        <dbReference type="ChEBI" id="CHEBI:33019"/>
        <dbReference type="ChEBI" id="CHEBI:57305"/>
        <dbReference type="ChEBI" id="CHEBI:78442"/>
        <dbReference type="ChEBI" id="CHEBI:78522"/>
        <dbReference type="ChEBI" id="CHEBI:456215"/>
        <dbReference type="EC" id="6.1.1.14"/>
    </reaction>
</comment>
<comment type="subunit">
    <text evidence="1">Tetramer of two alpha and two beta subunits.</text>
</comment>
<comment type="subcellular location">
    <subcellularLocation>
        <location evidence="1">Cytoplasm</location>
    </subcellularLocation>
</comment>
<comment type="similarity">
    <text evidence="1">Belongs to the class-II aminoacyl-tRNA synthetase family.</text>
</comment>
<sequence>MTFSQMILNLQNYWQEQGCVIMQPYDMPAGAGTFHPATFLRSLGKKPWAVAYVAPSRRPTDGRYGENPNRLGAYYQFQVLIKPSPDNIQELYLKSLENLGFDLKSHDIRFVEDNWESPSLGAWGLGWEVWLDGMEVTQFTYFQQVGGIAVDLVSAEITYGLERIAMYLQNVDNVYDIVWSEFNGEKIKYADVHKQSEYEFSKYNFEVSDVKILNEQFENSYKECKNILEQGLALPAYDYCMLAAHTFNLLDARGAISVAQRQDYMLKIRELSKNCAEIYKKNLNETE</sequence>
<feature type="chain" id="PRO_1000047408" description="Glycine--tRNA ligase alpha subunit">
    <location>
        <begin position="1"/>
        <end position="287"/>
    </location>
</feature>
<accession>A7H4C1</accession>
<gene>
    <name evidence="1" type="primary">glyQ</name>
    <name type="ordered locus">JJD26997_1302</name>
</gene>
<evidence type="ECO:0000255" key="1">
    <source>
        <dbReference type="HAMAP-Rule" id="MF_00254"/>
    </source>
</evidence>
<name>SYGA_CAMJD</name>
<protein>
    <recommendedName>
        <fullName evidence="1">Glycine--tRNA ligase alpha subunit</fullName>
        <ecNumber evidence="1">6.1.1.14</ecNumber>
    </recommendedName>
    <alternativeName>
        <fullName evidence="1">Glycyl-tRNA synthetase alpha subunit</fullName>
        <shortName evidence="1">GlyRS</shortName>
    </alternativeName>
</protein>
<organism>
    <name type="scientific">Campylobacter jejuni subsp. doylei (strain ATCC BAA-1458 / RM4099 / 269.97)</name>
    <dbReference type="NCBI Taxonomy" id="360109"/>
    <lineage>
        <taxon>Bacteria</taxon>
        <taxon>Pseudomonadati</taxon>
        <taxon>Campylobacterota</taxon>
        <taxon>Epsilonproteobacteria</taxon>
        <taxon>Campylobacterales</taxon>
        <taxon>Campylobacteraceae</taxon>
        <taxon>Campylobacter</taxon>
    </lineage>
</organism>